<organism>
    <name type="scientific">Listeria welshimeri serovar 6b (strain ATCC 35897 / DSM 20650 / CCUG 15529 / CIP 8149 / NCTC 11857 / SLCC 5334 / V8)</name>
    <dbReference type="NCBI Taxonomy" id="386043"/>
    <lineage>
        <taxon>Bacteria</taxon>
        <taxon>Bacillati</taxon>
        <taxon>Bacillota</taxon>
        <taxon>Bacilli</taxon>
        <taxon>Bacillales</taxon>
        <taxon>Listeriaceae</taxon>
        <taxon>Listeria</taxon>
    </lineage>
</organism>
<sequence>MNKGHRHIIIRELITSNEIDTQEDLVELLLERDVKVTQATVSRDIKELHLVKVPTQTGGYKYSLPADNSFNPHQKLKRALIDCFIGIDTVQFMIILKVMPGNGNSVGALIDNLDWPEKAGTICGDDTCLIICRSEENAKTLTDRFIDML</sequence>
<proteinExistence type="inferred from homology"/>
<dbReference type="EMBL" id="AM263198">
    <property type="protein sequence ID" value="CAK20800.1"/>
    <property type="molecule type" value="Genomic_DNA"/>
</dbReference>
<dbReference type="RefSeq" id="WP_011702180.1">
    <property type="nucleotide sequence ID" value="NC_008555.1"/>
</dbReference>
<dbReference type="SMR" id="A0AIG8"/>
<dbReference type="STRING" id="386043.lwe1382"/>
<dbReference type="GeneID" id="61189258"/>
<dbReference type="KEGG" id="lwe:lwe1382"/>
<dbReference type="eggNOG" id="COG1438">
    <property type="taxonomic scope" value="Bacteria"/>
</dbReference>
<dbReference type="HOGENOM" id="CLU_097103_3_0_9"/>
<dbReference type="OrthoDB" id="9807089at2"/>
<dbReference type="UniPathway" id="UPA00068"/>
<dbReference type="Proteomes" id="UP000000779">
    <property type="component" value="Chromosome"/>
</dbReference>
<dbReference type="GO" id="GO:0005737">
    <property type="term" value="C:cytoplasm"/>
    <property type="evidence" value="ECO:0007669"/>
    <property type="project" value="UniProtKB-SubCell"/>
</dbReference>
<dbReference type="GO" id="GO:0034618">
    <property type="term" value="F:arginine binding"/>
    <property type="evidence" value="ECO:0007669"/>
    <property type="project" value="InterPro"/>
</dbReference>
<dbReference type="GO" id="GO:0003677">
    <property type="term" value="F:DNA binding"/>
    <property type="evidence" value="ECO:0007669"/>
    <property type="project" value="UniProtKB-KW"/>
</dbReference>
<dbReference type="GO" id="GO:0003700">
    <property type="term" value="F:DNA-binding transcription factor activity"/>
    <property type="evidence" value="ECO:0007669"/>
    <property type="project" value="UniProtKB-UniRule"/>
</dbReference>
<dbReference type="GO" id="GO:0006526">
    <property type="term" value="P:L-arginine biosynthetic process"/>
    <property type="evidence" value="ECO:0007669"/>
    <property type="project" value="UniProtKB-UniPathway"/>
</dbReference>
<dbReference type="GO" id="GO:0051259">
    <property type="term" value="P:protein complex oligomerization"/>
    <property type="evidence" value="ECO:0007669"/>
    <property type="project" value="InterPro"/>
</dbReference>
<dbReference type="GO" id="GO:1900079">
    <property type="term" value="P:regulation of arginine biosynthetic process"/>
    <property type="evidence" value="ECO:0007669"/>
    <property type="project" value="UniProtKB-UniRule"/>
</dbReference>
<dbReference type="Gene3D" id="3.30.1360.40">
    <property type="match status" value="1"/>
</dbReference>
<dbReference type="Gene3D" id="1.10.10.10">
    <property type="entry name" value="Winged helix-like DNA-binding domain superfamily/Winged helix DNA-binding domain"/>
    <property type="match status" value="1"/>
</dbReference>
<dbReference type="HAMAP" id="MF_00173">
    <property type="entry name" value="Arg_repressor"/>
    <property type="match status" value="1"/>
</dbReference>
<dbReference type="InterPro" id="IPR001669">
    <property type="entry name" value="Arg_repress"/>
</dbReference>
<dbReference type="InterPro" id="IPR020899">
    <property type="entry name" value="Arg_repress_C"/>
</dbReference>
<dbReference type="InterPro" id="IPR036251">
    <property type="entry name" value="Arg_repress_C_sf"/>
</dbReference>
<dbReference type="InterPro" id="IPR020900">
    <property type="entry name" value="Arg_repress_DNA-bd"/>
</dbReference>
<dbReference type="InterPro" id="IPR036388">
    <property type="entry name" value="WH-like_DNA-bd_sf"/>
</dbReference>
<dbReference type="InterPro" id="IPR036390">
    <property type="entry name" value="WH_DNA-bd_sf"/>
</dbReference>
<dbReference type="NCBIfam" id="TIGR01529">
    <property type="entry name" value="argR_whole"/>
    <property type="match status" value="1"/>
</dbReference>
<dbReference type="NCBIfam" id="NF003281">
    <property type="entry name" value="PRK04280.1"/>
    <property type="match status" value="1"/>
</dbReference>
<dbReference type="PANTHER" id="PTHR34471">
    <property type="entry name" value="ARGININE REPRESSOR"/>
    <property type="match status" value="1"/>
</dbReference>
<dbReference type="PANTHER" id="PTHR34471:SF1">
    <property type="entry name" value="ARGININE REPRESSOR"/>
    <property type="match status" value="1"/>
</dbReference>
<dbReference type="Pfam" id="PF01316">
    <property type="entry name" value="Arg_repressor"/>
    <property type="match status" value="1"/>
</dbReference>
<dbReference type="Pfam" id="PF02863">
    <property type="entry name" value="Arg_repressor_C"/>
    <property type="match status" value="1"/>
</dbReference>
<dbReference type="PRINTS" id="PR01467">
    <property type="entry name" value="ARGREPRESSOR"/>
</dbReference>
<dbReference type="SUPFAM" id="SSF55252">
    <property type="entry name" value="C-terminal domain of arginine repressor"/>
    <property type="match status" value="1"/>
</dbReference>
<dbReference type="SUPFAM" id="SSF46785">
    <property type="entry name" value="Winged helix' DNA-binding domain"/>
    <property type="match status" value="1"/>
</dbReference>
<gene>
    <name evidence="1" type="primary">argR</name>
    <name type="ordered locus">lwe1382</name>
</gene>
<keyword id="KW-0028">Amino-acid biosynthesis</keyword>
<keyword id="KW-0055">Arginine biosynthesis</keyword>
<keyword id="KW-0963">Cytoplasm</keyword>
<keyword id="KW-0238">DNA-binding</keyword>
<keyword id="KW-0678">Repressor</keyword>
<keyword id="KW-0804">Transcription</keyword>
<keyword id="KW-0805">Transcription regulation</keyword>
<accession>A0AIG8</accession>
<reference key="1">
    <citation type="journal article" date="2006" name="J. Bacteriol.">
        <title>Whole-genome sequence of Listeria welshimeri reveals common steps in genome reduction with Listeria innocua as compared to Listeria monocytogenes.</title>
        <authorList>
            <person name="Hain T."/>
            <person name="Steinweg C."/>
            <person name="Kuenne C.T."/>
            <person name="Billion A."/>
            <person name="Ghai R."/>
            <person name="Chatterjee S.S."/>
            <person name="Domann E."/>
            <person name="Kaerst U."/>
            <person name="Goesmann A."/>
            <person name="Bekel T."/>
            <person name="Bartels D."/>
            <person name="Kaiser O."/>
            <person name="Meyer F."/>
            <person name="Puehler A."/>
            <person name="Weisshaar B."/>
            <person name="Wehland J."/>
            <person name="Liang C."/>
            <person name="Dandekar T."/>
            <person name="Lampidis R."/>
            <person name="Kreft J."/>
            <person name="Goebel W."/>
            <person name="Chakraborty T."/>
        </authorList>
    </citation>
    <scope>NUCLEOTIDE SEQUENCE [LARGE SCALE GENOMIC DNA]</scope>
    <source>
        <strain>ATCC 35897 / DSM 20650 / CCUG 15529 / CIP 8149 / NCTC 11857 / SLCC 5334 / V8</strain>
    </source>
</reference>
<name>ARGR_LISW6</name>
<feature type="chain" id="PRO_1000023577" description="Arginine repressor">
    <location>
        <begin position="1"/>
        <end position="149"/>
    </location>
</feature>
<protein>
    <recommendedName>
        <fullName evidence="1">Arginine repressor</fullName>
    </recommendedName>
</protein>
<comment type="function">
    <text evidence="1">Regulates arginine biosynthesis genes.</text>
</comment>
<comment type="pathway">
    <text>Amino-acid biosynthesis; L-arginine biosynthesis [regulation].</text>
</comment>
<comment type="subcellular location">
    <subcellularLocation>
        <location evidence="1">Cytoplasm</location>
    </subcellularLocation>
</comment>
<comment type="similarity">
    <text evidence="1">Belongs to the ArgR family.</text>
</comment>
<evidence type="ECO:0000255" key="1">
    <source>
        <dbReference type="HAMAP-Rule" id="MF_00173"/>
    </source>
</evidence>